<keyword id="KW-0150">Chloroplast</keyword>
<keyword id="KW-0249">Electron transport</keyword>
<keyword id="KW-0472">Membrane</keyword>
<keyword id="KW-0602">Photosynthesis</keyword>
<keyword id="KW-0934">Plastid</keyword>
<keyword id="KW-0793">Thylakoid</keyword>
<keyword id="KW-0812">Transmembrane</keyword>
<keyword id="KW-1133">Transmembrane helix</keyword>
<keyword id="KW-0813">Transport</keyword>
<sequence>MIEVFLFGIVLGLIPITLAGLFVTAYLQYRRGDQLDL</sequence>
<protein>
    <recommendedName>
        <fullName evidence="1">Cytochrome b6-f complex subunit 5</fullName>
    </recommendedName>
    <alternativeName>
        <fullName evidence="1">Cytochrome b6-f complex subunit PetG</fullName>
    </alternativeName>
    <alternativeName>
        <fullName evidence="1">Cytochrome b6-f complex subunit V</fullName>
    </alternativeName>
</protein>
<comment type="function">
    <text evidence="1">Component of the cytochrome b6-f complex, which mediates electron transfer between photosystem II (PSII) and photosystem I (PSI), cyclic electron flow around PSI, and state transitions. PetG is required for either the stability or assembly of the cytochrome b6-f complex.</text>
</comment>
<comment type="subunit">
    <text evidence="1">The 4 large subunits of the cytochrome b6-f complex are cytochrome b6, subunit IV (17 kDa polypeptide, PetD), cytochrome f and the Rieske protein, while the 4 small subunits are PetG, PetL, PetM and PetN. The complex functions as a dimer.</text>
</comment>
<comment type="subcellular location">
    <subcellularLocation>
        <location evidence="1">Plastid</location>
        <location evidence="1">Chloroplast thylakoid membrane</location>
        <topology evidence="1">Single-pass membrane protein</topology>
    </subcellularLocation>
</comment>
<comment type="similarity">
    <text evidence="1">Belongs to the PetG family.</text>
</comment>
<organism>
    <name type="scientific">Populus alba</name>
    <name type="common">White poplar</name>
    <dbReference type="NCBI Taxonomy" id="43335"/>
    <lineage>
        <taxon>Eukaryota</taxon>
        <taxon>Viridiplantae</taxon>
        <taxon>Streptophyta</taxon>
        <taxon>Embryophyta</taxon>
        <taxon>Tracheophyta</taxon>
        <taxon>Spermatophyta</taxon>
        <taxon>Magnoliopsida</taxon>
        <taxon>eudicotyledons</taxon>
        <taxon>Gunneridae</taxon>
        <taxon>Pentapetalae</taxon>
        <taxon>rosids</taxon>
        <taxon>fabids</taxon>
        <taxon>Malpighiales</taxon>
        <taxon>Salicaceae</taxon>
        <taxon>Saliceae</taxon>
        <taxon>Populus</taxon>
    </lineage>
</organism>
<reference key="1">
    <citation type="submission" date="2005-03" db="EMBL/GenBank/DDBJ databases">
        <title>Complete structure of the chloroplast genome of Populus alba.</title>
        <authorList>
            <person name="Okumura S."/>
            <person name="Yamashita A."/>
            <person name="Kanamoto H."/>
            <person name="Hattori M."/>
            <person name="Takase H."/>
            <person name="Tomizawa K."/>
        </authorList>
    </citation>
    <scope>NUCLEOTIDE SEQUENCE [LARGE SCALE GENOMIC DNA]</scope>
</reference>
<gene>
    <name evidence="1" type="primary">petG</name>
</gene>
<feature type="chain" id="PRO_0000275504" description="Cytochrome b6-f complex subunit 5">
    <location>
        <begin position="1"/>
        <end position="37"/>
    </location>
</feature>
<feature type="transmembrane region" description="Helical" evidence="1">
    <location>
        <begin position="5"/>
        <end position="25"/>
    </location>
</feature>
<name>PETG_POPAL</name>
<geneLocation type="chloroplast"/>
<accession>Q14FD8</accession>
<dbReference type="EMBL" id="AP008956">
    <property type="protein sequence ID" value="BAE97224.1"/>
    <property type="molecule type" value="Genomic_DNA"/>
</dbReference>
<dbReference type="RefSeq" id="YP_665577.1">
    <property type="nucleotide sequence ID" value="NC_008235.1"/>
</dbReference>
<dbReference type="SMR" id="Q14FD8"/>
<dbReference type="GeneID" id="4178241"/>
<dbReference type="KEGG" id="palz:4178241"/>
<dbReference type="OrthoDB" id="11092at3646"/>
<dbReference type="GO" id="GO:0009535">
    <property type="term" value="C:chloroplast thylakoid membrane"/>
    <property type="evidence" value="ECO:0007669"/>
    <property type="project" value="UniProtKB-SubCell"/>
</dbReference>
<dbReference type="GO" id="GO:0009512">
    <property type="term" value="C:cytochrome b6f complex"/>
    <property type="evidence" value="ECO:0007669"/>
    <property type="project" value="InterPro"/>
</dbReference>
<dbReference type="GO" id="GO:0045158">
    <property type="term" value="F:electron transporter, transferring electrons within cytochrome b6/f complex of photosystem II activity"/>
    <property type="evidence" value="ECO:0007669"/>
    <property type="project" value="UniProtKB-UniRule"/>
</dbReference>
<dbReference type="GO" id="GO:0017004">
    <property type="term" value="P:cytochrome complex assembly"/>
    <property type="evidence" value="ECO:0007669"/>
    <property type="project" value="UniProtKB-UniRule"/>
</dbReference>
<dbReference type="GO" id="GO:0015979">
    <property type="term" value="P:photosynthesis"/>
    <property type="evidence" value="ECO:0007669"/>
    <property type="project" value="UniProtKB-KW"/>
</dbReference>
<dbReference type="HAMAP" id="MF_00432">
    <property type="entry name" value="Cytb6_f_PetG"/>
    <property type="match status" value="1"/>
</dbReference>
<dbReference type="InterPro" id="IPR003683">
    <property type="entry name" value="Cyt_6/f_cplx_su5"/>
</dbReference>
<dbReference type="InterPro" id="IPR036099">
    <property type="entry name" value="Cyt_6/f_cplx_su5_sf"/>
</dbReference>
<dbReference type="NCBIfam" id="NF001907">
    <property type="entry name" value="PRK00665.1"/>
    <property type="match status" value="1"/>
</dbReference>
<dbReference type="Pfam" id="PF02529">
    <property type="entry name" value="PetG"/>
    <property type="match status" value="1"/>
</dbReference>
<dbReference type="PIRSF" id="PIRSF000034">
    <property type="entry name" value="Cyt_b6-f_V"/>
    <property type="match status" value="1"/>
</dbReference>
<dbReference type="SUPFAM" id="SSF103446">
    <property type="entry name" value="PetG subunit of the cytochrome b6f complex"/>
    <property type="match status" value="1"/>
</dbReference>
<evidence type="ECO:0000255" key="1">
    <source>
        <dbReference type="HAMAP-Rule" id="MF_00432"/>
    </source>
</evidence>
<proteinExistence type="inferred from homology"/>